<gene>
    <name evidence="1" type="primary">plsB</name>
    <name type="ordered locus">Sden_3514</name>
</gene>
<dbReference type="EC" id="2.3.1.15" evidence="1"/>
<dbReference type="EMBL" id="CP000302">
    <property type="protein sequence ID" value="ABE56789.1"/>
    <property type="molecule type" value="Genomic_DNA"/>
</dbReference>
<dbReference type="RefSeq" id="WP_011497929.1">
    <property type="nucleotide sequence ID" value="NC_007954.1"/>
</dbReference>
<dbReference type="SMR" id="Q12ID7"/>
<dbReference type="STRING" id="318161.Sden_3514"/>
<dbReference type="KEGG" id="sdn:Sden_3514"/>
<dbReference type="eggNOG" id="COG2937">
    <property type="taxonomic scope" value="Bacteria"/>
</dbReference>
<dbReference type="HOGENOM" id="CLU_015407_0_0_6"/>
<dbReference type="OrthoDB" id="335193at2"/>
<dbReference type="UniPathway" id="UPA00557">
    <property type="reaction ID" value="UER00612"/>
</dbReference>
<dbReference type="Proteomes" id="UP000001982">
    <property type="component" value="Chromosome"/>
</dbReference>
<dbReference type="GO" id="GO:0005886">
    <property type="term" value="C:plasma membrane"/>
    <property type="evidence" value="ECO:0007669"/>
    <property type="project" value="UniProtKB-SubCell"/>
</dbReference>
<dbReference type="GO" id="GO:0004366">
    <property type="term" value="F:glycerol-3-phosphate O-acyltransferase activity"/>
    <property type="evidence" value="ECO:0007669"/>
    <property type="project" value="UniProtKB-UniRule"/>
</dbReference>
<dbReference type="GO" id="GO:0016024">
    <property type="term" value="P:CDP-diacylglycerol biosynthetic process"/>
    <property type="evidence" value="ECO:0007669"/>
    <property type="project" value="UniProtKB-UniRule"/>
</dbReference>
<dbReference type="GO" id="GO:0006631">
    <property type="term" value="P:fatty acid metabolic process"/>
    <property type="evidence" value="ECO:0007669"/>
    <property type="project" value="TreeGrafter"/>
</dbReference>
<dbReference type="CDD" id="cd07993">
    <property type="entry name" value="LPLAT_DHAPAT-like"/>
    <property type="match status" value="1"/>
</dbReference>
<dbReference type="HAMAP" id="MF_00393">
    <property type="entry name" value="Glyc3P_acyltrans"/>
    <property type="match status" value="1"/>
</dbReference>
<dbReference type="InterPro" id="IPR022284">
    <property type="entry name" value="GPAT/DHAPAT"/>
</dbReference>
<dbReference type="InterPro" id="IPR045520">
    <property type="entry name" value="GPAT/DHAPAT_C"/>
</dbReference>
<dbReference type="InterPro" id="IPR041728">
    <property type="entry name" value="GPAT/DHAPAT_LPLAT"/>
</dbReference>
<dbReference type="InterPro" id="IPR028354">
    <property type="entry name" value="GPAT_PlsB"/>
</dbReference>
<dbReference type="InterPro" id="IPR002123">
    <property type="entry name" value="Plipid/glycerol_acylTrfase"/>
</dbReference>
<dbReference type="NCBIfam" id="TIGR03703">
    <property type="entry name" value="plsB"/>
    <property type="match status" value="1"/>
</dbReference>
<dbReference type="NCBIfam" id="NF003441">
    <property type="entry name" value="PRK04974.1"/>
    <property type="match status" value="1"/>
</dbReference>
<dbReference type="PANTHER" id="PTHR12563:SF17">
    <property type="entry name" value="DIHYDROXYACETONE PHOSPHATE ACYLTRANSFERASE"/>
    <property type="match status" value="1"/>
</dbReference>
<dbReference type="PANTHER" id="PTHR12563">
    <property type="entry name" value="GLYCEROL-3-PHOSPHATE ACYLTRANSFERASE"/>
    <property type="match status" value="1"/>
</dbReference>
<dbReference type="Pfam" id="PF01553">
    <property type="entry name" value="Acyltransferase"/>
    <property type="match status" value="1"/>
</dbReference>
<dbReference type="Pfam" id="PF19277">
    <property type="entry name" value="GPAT_C"/>
    <property type="match status" value="1"/>
</dbReference>
<dbReference type="PIRSF" id="PIRSF500064">
    <property type="entry name" value="GPAT"/>
    <property type="match status" value="1"/>
</dbReference>
<dbReference type="PIRSF" id="PIRSF000437">
    <property type="entry name" value="GPAT_DHAPAT"/>
    <property type="match status" value="1"/>
</dbReference>
<dbReference type="SMART" id="SM00563">
    <property type="entry name" value="PlsC"/>
    <property type="match status" value="1"/>
</dbReference>
<dbReference type="SUPFAM" id="SSF69593">
    <property type="entry name" value="Glycerol-3-phosphate (1)-acyltransferase"/>
    <property type="match status" value="1"/>
</dbReference>
<comment type="catalytic activity">
    <reaction evidence="1">
        <text>sn-glycerol 3-phosphate + an acyl-CoA = a 1-acyl-sn-glycero-3-phosphate + CoA</text>
        <dbReference type="Rhea" id="RHEA:15325"/>
        <dbReference type="ChEBI" id="CHEBI:57287"/>
        <dbReference type="ChEBI" id="CHEBI:57597"/>
        <dbReference type="ChEBI" id="CHEBI:57970"/>
        <dbReference type="ChEBI" id="CHEBI:58342"/>
        <dbReference type="EC" id="2.3.1.15"/>
    </reaction>
</comment>
<comment type="pathway">
    <text evidence="1">Phospholipid metabolism; CDP-diacylglycerol biosynthesis; CDP-diacylglycerol from sn-glycerol 3-phosphate: step 1/3.</text>
</comment>
<comment type="subcellular location">
    <subcellularLocation>
        <location evidence="1">Cell inner membrane</location>
        <topology evidence="1">Peripheral membrane protein</topology>
        <orientation evidence="1">Cytoplasmic side</orientation>
    </subcellularLocation>
</comment>
<comment type="domain">
    <text evidence="1">The HXXXXD motif is essential for acyltransferase activity and may constitute the binding site for the phosphate moiety of the glycerol-3-phosphate.</text>
</comment>
<comment type="similarity">
    <text evidence="1">Belongs to the GPAT/DAPAT family.</text>
</comment>
<proteinExistence type="inferred from homology"/>
<reference key="1">
    <citation type="submission" date="2006-03" db="EMBL/GenBank/DDBJ databases">
        <title>Complete sequence of Shewanella denitrificans OS217.</title>
        <authorList>
            <consortium name="US DOE Joint Genome Institute"/>
            <person name="Copeland A."/>
            <person name="Lucas S."/>
            <person name="Lapidus A."/>
            <person name="Barry K."/>
            <person name="Detter J.C."/>
            <person name="Glavina del Rio T."/>
            <person name="Hammon N."/>
            <person name="Israni S."/>
            <person name="Dalin E."/>
            <person name="Tice H."/>
            <person name="Pitluck S."/>
            <person name="Brettin T."/>
            <person name="Bruce D."/>
            <person name="Han C."/>
            <person name="Tapia R."/>
            <person name="Gilna P."/>
            <person name="Kiss H."/>
            <person name="Schmutz J."/>
            <person name="Larimer F."/>
            <person name="Land M."/>
            <person name="Hauser L."/>
            <person name="Kyrpides N."/>
            <person name="Lykidis A."/>
            <person name="Richardson P."/>
        </authorList>
    </citation>
    <scope>NUCLEOTIDE SEQUENCE [LARGE SCALE GENOMIC DNA]</scope>
    <source>
        <strain>OS217 / ATCC BAA-1090 / DSM 15013</strain>
    </source>
</reference>
<name>PLSB_SHEDO</name>
<organism>
    <name type="scientific">Shewanella denitrificans (strain OS217 / ATCC BAA-1090 / DSM 15013)</name>
    <dbReference type="NCBI Taxonomy" id="318161"/>
    <lineage>
        <taxon>Bacteria</taxon>
        <taxon>Pseudomonadati</taxon>
        <taxon>Pseudomonadota</taxon>
        <taxon>Gammaproteobacteria</taxon>
        <taxon>Alteromonadales</taxon>
        <taxon>Shewanellaceae</taxon>
        <taxon>Shewanella</taxon>
    </lineage>
</organism>
<keyword id="KW-0012">Acyltransferase</keyword>
<keyword id="KW-0997">Cell inner membrane</keyword>
<keyword id="KW-1003">Cell membrane</keyword>
<keyword id="KW-0444">Lipid biosynthesis</keyword>
<keyword id="KW-0443">Lipid metabolism</keyword>
<keyword id="KW-0472">Membrane</keyword>
<keyword id="KW-0594">Phospholipid biosynthesis</keyword>
<keyword id="KW-1208">Phospholipid metabolism</keyword>
<keyword id="KW-1185">Reference proteome</keyword>
<keyword id="KW-0808">Transferase</keyword>
<sequence length="807" mass="91643">MSNYDSIFIKSLRWIQKWLVQTIVVPHDPLTDLNLDPSKPVVYVMKTESISDLAALSGITANFGLPSPYDPLTLDKVSIARVVCLEGRKPMIGQREGGEKFLDSFTQLLALHKQDKQLDIQLVPVSLYWGRTPGKEDDTMKAAVFERENPTWLRKFFMILFLGRHNFVQFSNAVSLRHMADEHGTDKSIAHKLVRVARVHFRRQRKVMTGPLLPNRQALFNALLKSESIKKAIEEEATNKKISIEKARETAIVYLDEIAADYSDSLVRITERFLTWLWNKLYSGINIERAEQVRQLHHDGHEIVYVPCHRSHMDYLLISYILYYQGMVPPHIAAGINLNFWPAGPMFRRGGAFFIRRSFNGNKLYTAVFREYLDQLFAKGYSVEYFTEGGRSRTGRLLAPKTGMIAMTMNSVLRGIERPVTLVPVYLGYDHVMEVATYHKELSGKKKQKESLWQVFGAIRKLGNFGQGYVNFGEPINMQNFLTEQAPEWRAELAKDPEQKPSWFTPAVNVLANRVMTNINGAAAASSVTLTSLILLASEQNALERTQLERQLDLYLNLLKKVPYTPFTSVAQGDSQQVVDHCLGLNKFISTRDALGEIISIDPKIAVTMSYYRNNIIHLMVVPSLIASCLVQYEVRSRSEIKAIVNDFYPLLKAELFMGIADLDSYIDDIIDLLIEEQLVEESAGLSIVESHISQLWLMAQTVSETLQRYAIIFNLLAHKPNVERADLENDSHLLAQRLGALHGITAPEFYDKKLYNTLSVKLKELGYLSAVEKQVDVARIRDHANGLLWSSVRQTIIDSVAAEHGH</sequence>
<evidence type="ECO:0000255" key="1">
    <source>
        <dbReference type="HAMAP-Rule" id="MF_00393"/>
    </source>
</evidence>
<protein>
    <recommendedName>
        <fullName evidence="1">Glycerol-3-phosphate acyltransferase</fullName>
        <shortName evidence="1">GPAT</shortName>
        <ecNumber evidence="1">2.3.1.15</ecNumber>
    </recommendedName>
</protein>
<feature type="chain" id="PRO_1000049456" description="Glycerol-3-phosphate acyltransferase">
    <location>
        <begin position="1"/>
        <end position="807"/>
    </location>
</feature>
<feature type="short sequence motif" description="HXXXXD motif">
    <location>
        <begin position="308"/>
        <end position="313"/>
    </location>
</feature>
<accession>Q12ID7</accession>